<reference key="1">
    <citation type="journal article" date="2000" name="Infect. Immun.">
        <title>Identification of two distinct types of flagellar cap proteins, FliD, in Pseudomonas aeruginosa.</title>
        <authorList>
            <person name="Arora S.K."/>
            <person name="Dasgupta N."/>
            <person name="Lory S."/>
            <person name="Ramphal R."/>
        </authorList>
    </citation>
    <scope>NUCLEOTIDE SEQUENCE [GENOMIC DNA]</scope>
    <source>
        <strain>1244</strain>
        <strain>ATCC 15692 / DSM 22644 / CIP 104116 / JCM 14847 / LMG 12228 / 1C / PRS 101 / PAO1</strain>
        <strain>CS29</strain>
    </source>
</reference>
<reference key="2">
    <citation type="journal article" date="2000" name="Nature">
        <title>Complete genome sequence of Pseudomonas aeruginosa PAO1, an opportunistic pathogen.</title>
        <authorList>
            <person name="Stover C.K."/>
            <person name="Pham X.-Q.T."/>
            <person name="Erwin A.L."/>
            <person name="Mizoguchi S.D."/>
            <person name="Warrener P."/>
            <person name="Hickey M.J."/>
            <person name="Brinkman F.S.L."/>
            <person name="Hufnagle W.O."/>
            <person name="Kowalik D.J."/>
            <person name="Lagrou M."/>
            <person name="Garber R.L."/>
            <person name="Goltry L."/>
            <person name="Tolentino E."/>
            <person name="Westbrock-Wadman S."/>
            <person name="Yuan Y."/>
            <person name="Brody L.L."/>
            <person name="Coulter S.N."/>
            <person name="Folger K.R."/>
            <person name="Kas A."/>
            <person name="Larbig K."/>
            <person name="Lim R.M."/>
            <person name="Smith K.A."/>
            <person name="Spencer D.H."/>
            <person name="Wong G.K.-S."/>
            <person name="Wu Z."/>
            <person name="Paulsen I.T."/>
            <person name="Reizer J."/>
            <person name="Saier M.H. Jr."/>
            <person name="Hancock R.E.W."/>
            <person name="Lory S."/>
            <person name="Olson M.V."/>
        </authorList>
    </citation>
    <scope>NUCLEOTIDE SEQUENCE [LARGE SCALE GENOMIC DNA]</scope>
    <source>
        <strain>ATCC 15692 / DSM 22644 / CIP 104116 / JCM 14847 / LMG 12228 / 1C / PRS 101 / PAO1</strain>
    </source>
</reference>
<reference key="3">
    <citation type="submission" date="1996-04" db="EMBL/GenBank/DDBJ databases">
        <authorList>
            <person name="Wahl S.A."/>
            <person name="Baker N.R."/>
        </authorList>
    </citation>
    <scope>NUCLEOTIDE SEQUENCE [GENOMIC DNA] OF 1-148</scope>
    <source>
        <strain>ATCC 15692 / DSM 22644 / CIP 104116 / JCM 14847 / LMG 12228 / 1C / PRS 101 / PAO1</strain>
    </source>
</reference>
<keyword id="KW-0002">3D-structure</keyword>
<keyword id="KW-0975">Bacterial flagellum</keyword>
<keyword id="KW-0175">Coiled coil</keyword>
<keyword id="KW-1185">Reference proteome</keyword>
<keyword id="KW-0964">Secreted</keyword>
<protein>
    <recommendedName>
        <fullName>B-type flagellar hook-associated protein 2</fullName>
        <shortName>HAP2</shortName>
    </recommendedName>
    <alternativeName>
        <fullName>Filament cap protein</fullName>
    </alternativeName>
    <alternativeName>
        <fullName>Flagellar cap protein</fullName>
    </alternativeName>
</protein>
<comment type="function">
    <text>Required for the morphogenesis and for the elongation of the flagellar filament by facilitating polymerization of the flagellin monomers at the tip of growing filament. Forms a capping structure, which prevents flagellin subunits (transported through the central channel of the flagellum) from leaking out without polymerization at the distal end. Essential for motility. Responsible for adhesion to mucin, which is the initial event in colonization by this organism of the airways of cystic fibrosis patients.</text>
</comment>
<comment type="subunit">
    <text evidence="1">Homopentamer.</text>
</comment>
<comment type="subcellular location">
    <subcellularLocation>
        <location>Secreted</location>
    </subcellularLocation>
    <subcellularLocation>
        <location>Bacterial flagellum</location>
    </subcellularLocation>
</comment>
<comment type="similarity">
    <text evidence="3">Belongs to the FliD family.</text>
</comment>
<organism>
    <name type="scientific">Pseudomonas aeruginosa (strain ATCC 15692 / DSM 22644 / CIP 104116 / JCM 14847 / LMG 12228 / 1C / PRS 101 / PAO1)</name>
    <dbReference type="NCBI Taxonomy" id="208964"/>
    <lineage>
        <taxon>Bacteria</taxon>
        <taxon>Pseudomonadati</taxon>
        <taxon>Pseudomonadota</taxon>
        <taxon>Gammaproteobacteria</taxon>
        <taxon>Pseudomonadales</taxon>
        <taxon>Pseudomonadaceae</taxon>
        <taxon>Pseudomonas</taxon>
    </lineage>
</organism>
<evidence type="ECO:0000250" key="1"/>
<evidence type="ECO:0000255" key="2"/>
<evidence type="ECO:0000305" key="3"/>
<evidence type="ECO:0007829" key="4">
    <source>
        <dbReference type="PDB" id="5FHY"/>
    </source>
</evidence>
<name>FLID2_PSEAE</name>
<dbReference type="EMBL" id="AF139821">
    <property type="protein sequence ID" value="AAF35976.1"/>
    <property type="molecule type" value="Genomic_DNA"/>
</dbReference>
<dbReference type="EMBL" id="AF139819">
    <property type="protein sequence ID" value="AAF35974.1"/>
    <property type="molecule type" value="Genomic_DNA"/>
</dbReference>
<dbReference type="EMBL" id="AF139820">
    <property type="protein sequence ID" value="AAF35975.1"/>
    <property type="molecule type" value="Genomic_DNA"/>
</dbReference>
<dbReference type="EMBL" id="AE004091">
    <property type="protein sequence ID" value="AAG04483.1"/>
    <property type="molecule type" value="Genomic_DNA"/>
</dbReference>
<dbReference type="EMBL" id="U54775">
    <property type="protein sequence ID" value="AAA99809.1"/>
    <property type="molecule type" value="Genomic_DNA"/>
</dbReference>
<dbReference type="PIR" id="G83507">
    <property type="entry name" value="G83507"/>
</dbReference>
<dbReference type="RefSeq" id="NP_249785.1">
    <property type="nucleotide sequence ID" value="NC_002516.2"/>
</dbReference>
<dbReference type="RefSeq" id="WP_003082190.1">
    <property type="nucleotide sequence ID" value="NZ_QZGE01000006.1"/>
</dbReference>
<dbReference type="PDB" id="5FHY">
    <property type="method" value="X-ray"/>
    <property type="resolution" value="2.20 A"/>
    <property type="chains" value="A/B=78-405"/>
</dbReference>
<dbReference type="PDBsum" id="5FHY"/>
<dbReference type="SMR" id="Q9K3C5"/>
<dbReference type="FunCoup" id="Q9K3C5">
    <property type="interactions" value="63"/>
</dbReference>
<dbReference type="STRING" id="208964.PA1094"/>
<dbReference type="PaxDb" id="208964-PA1094"/>
<dbReference type="GeneID" id="881775"/>
<dbReference type="KEGG" id="pae:PA1094"/>
<dbReference type="PATRIC" id="fig|208964.12.peg.1133"/>
<dbReference type="PseudoCAP" id="PA1094"/>
<dbReference type="HOGENOM" id="CLU_015182_5_0_6"/>
<dbReference type="InParanoid" id="Q9K3C5"/>
<dbReference type="OrthoDB" id="9810816at2"/>
<dbReference type="PhylomeDB" id="Q9K3C5"/>
<dbReference type="BioCyc" id="PAER208964:G1FZ6-1117-MONOMER"/>
<dbReference type="Proteomes" id="UP000002438">
    <property type="component" value="Chromosome"/>
</dbReference>
<dbReference type="GO" id="GO:0009421">
    <property type="term" value="C:bacterial-type flagellum filament cap"/>
    <property type="evidence" value="ECO:0000314"/>
    <property type="project" value="PseudoCAP"/>
</dbReference>
<dbReference type="GO" id="GO:0009424">
    <property type="term" value="C:bacterial-type flagellum hook"/>
    <property type="evidence" value="ECO:0007669"/>
    <property type="project" value="InterPro"/>
</dbReference>
<dbReference type="GO" id="GO:0005576">
    <property type="term" value="C:extracellular region"/>
    <property type="evidence" value="ECO:0007669"/>
    <property type="project" value="UniProtKB-SubCell"/>
</dbReference>
<dbReference type="GO" id="GO:0071973">
    <property type="term" value="P:bacterial-type flagellum-dependent cell motility"/>
    <property type="evidence" value="ECO:0000318"/>
    <property type="project" value="GO_Central"/>
</dbReference>
<dbReference type="GO" id="GO:0007155">
    <property type="term" value="P:cell adhesion"/>
    <property type="evidence" value="ECO:0000314"/>
    <property type="project" value="PseudoCAP"/>
</dbReference>
<dbReference type="InterPro" id="IPR010810">
    <property type="entry name" value="Flagellin_hook_IN_motif"/>
</dbReference>
<dbReference type="InterPro" id="IPR040026">
    <property type="entry name" value="FliD"/>
</dbReference>
<dbReference type="InterPro" id="IPR010809">
    <property type="entry name" value="FliD_C"/>
</dbReference>
<dbReference type="InterPro" id="IPR003481">
    <property type="entry name" value="FliD_N"/>
</dbReference>
<dbReference type="PANTHER" id="PTHR30288">
    <property type="entry name" value="FLAGELLAR CAP/ASSEMBLY PROTEIN FLID"/>
    <property type="match status" value="1"/>
</dbReference>
<dbReference type="PANTHER" id="PTHR30288:SF0">
    <property type="entry name" value="FLAGELLAR HOOK-ASSOCIATED PROTEIN 2"/>
    <property type="match status" value="1"/>
</dbReference>
<dbReference type="Pfam" id="PF07196">
    <property type="entry name" value="Flagellin_IN"/>
    <property type="match status" value="1"/>
</dbReference>
<dbReference type="Pfam" id="PF07195">
    <property type="entry name" value="FliD_C"/>
    <property type="match status" value="1"/>
</dbReference>
<dbReference type="Pfam" id="PF02465">
    <property type="entry name" value="FliD_N"/>
    <property type="match status" value="1"/>
</dbReference>
<sequence length="474" mass="49450">MAGISIGVGSTDYTDLVNKMVNLEGAAKTNQLATLEKTTTTRLTALGQFKSAISAFQTALTALNSNAVFMARTAKSSNEDILKASATQSAVAGTYQIQVNSLATSSKIALQAIADPANAKFNSGTLNISVGDTKLPAITVDSSNNTLAGMRDAINQAGKEAGVSATIITDNSGSRLVLSSTKTGDGKDIKVEVSDDGSGGNTSLSQLAFDPATAPKLSDGAAAGYVTKAANGEITVDGLKRSIASNSVSDVIDGVSFDVKAVTEAGKPITLTVSRDDAGVKDNVKKFVEAYNTLTKFINEQTVVTKVGEDKNPVTGALLGDASVRALVNTMRSELIASNENGSVRNLAALGITTTKDGTLEIDEKKLDKAISADFEGVASYFTGDTGLAKRLGDKMKPYTDAQGILDQRTTTLQKTLSNVDTQKADLAKRLAALQEKLTTQFNLLSAMQDEMTKRQKSITDNLASLPYGSGKKT</sequence>
<accession>Q9K3C5</accession>
<accession>P72153</accession>
<feature type="chain" id="PRO_0000177022" description="B-type flagellar hook-associated protein 2">
    <location>
        <begin position="1"/>
        <end position="474"/>
    </location>
</feature>
<feature type="coiled-coil region" evidence="2">
    <location>
        <begin position="408"/>
        <end position="454"/>
    </location>
</feature>
<feature type="strand" evidence="4">
    <location>
        <begin position="82"/>
        <end position="89"/>
    </location>
</feature>
<feature type="strand" evidence="4">
    <location>
        <begin position="93"/>
        <end position="101"/>
    </location>
</feature>
<feature type="strand" evidence="4">
    <location>
        <begin position="104"/>
        <end position="109"/>
    </location>
</feature>
<feature type="strand" evidence="4">
    <location>
        <begin position="113"/>
        <end position="115"/>
    </location>
</feature>
<feature type="strand" evidence="4">
    <location>
        <begin position="123"/>
        <end position="130"/>
    </location>
</feature>
<feature type="strand" evidence="4">
    <location>
        <begin position="138"/>
        <end position="140"/>
    </location>
</feature>
<feature type="turn" evidence="4">
    <location>
        <begin position="142"/>
        <end position="144"/>
    </location>
</feature>
<feature type="helix" evidence="4">
    <location>
        <begin position="147"/>
        <end position="157"/>
    </location>
</feature>
<feature type="turn" evidence="4">
    <location>
        <begin position="159"/>
        <end position="162"/>
    </location>
</feature>
<feature type="strand" evidence="4">
    <location>
        <begin position="163"/>
        <end position="170"/>
    </location>
</feature>
<feature type="strand" evidence="4">
    <location>
        <begin position="173"/>
        <end position="184"/>
    </location>
</feature>
<feature type="strand" evidence="4">
    <location>
        <begin position="189"/>
        <end position="195"/>
    </location>
</feature>
<feature type="strand" evidence="4">
    <location>
        <begin position="199"/>
        <end position="202"/>
    </location>
</feature>
<feature type="helix" evidence="4">
    <location>
        <begin position="205"/>
        <end position="207"/>
    </location>
</feature>
<feature type="turn" evidence="4">
    <location>
        <begin position="211"/>
        <end position="213"/>
    </location>
</feature>
<feature type="strand" evidence="4">
    <location>
        <begin position="219"/>
        <end position="222"/>
    </location>
</feature>
<feature type="strand" evidence="4">
    <location>
        <begin position="224"/>
        <end position="227"/>
    </location>
</feature>
<feature type="strand" evidence="4">
    <location>
        <begin position="232"/>
        <end position="236"/>
    </location>
</feature>
<feature type="strand" evidence="4">
    <location>
        <begin position="239"/>
        <end position="252"/>
    </location>
</feature>
<feature type="strand" evidence="4">
    <location>
        <begin position="255"/>
        <end position="259"/>
    </location>
</feature>
<feature type="strand" evidence="4">
    <location>
        <begin position="269"/>
        <end position="273"/>
    </location>
</feature>
<feature type="helix" evidence="4">
    <location>
        <begin position="284"/>
        <end position="296"/>
    </location>
</feature>
<feature type="turn" evidence="4">
    <location>
        <begin position="297"/>
        <end position="300"/>
    </location>
</feature>
<feature type="strand" evidence="4">
    <location>
        <begin position="301"/>
        <end position="303"/>
    </location>
</feature>
<gene>
    <name type="primary">fliD</name>
    <name type="ordered locus">PA1094</name>
</gene>
<proteinExistence type="evidence at protein level"/>